<protein>
    <recommendedName>
        <fullName>SPbeta prophage-derived uncharacterized protein YopW</fullName>
    </recommendedName>
</protein>
<sequence length="111" mass="12549">MELSLDELKLCLKPLVFFGELKLEISDYEEGKKIEVLDHDEGSLINLADQTINENYVCTTCNCTLYTNENNEVCFIEHPYGAITAVNKDQVIHLTKLIGAIINTDEEDPVE</sequence>
<reference key="1">
    <citation type="journal article" date="1997" name="Nature">
        <title>The complete genome sequence of the Gram-positive bacterium Bacillus subtilis.</title>
        <authorList>
            <person name="Kunst F."/>
            <person name="Ogasawara N."/>
            <person name="Moszer I."/>
            <person name="Albertini A.M."/>
            <person name="Alloni G."/>
            <person name="Azevedo V."/>
            <person name="Bertero M.G."/>
            <person name="Bessieres P."/>
            <person name="Bolotin A."/>
            <person name="Borchert S."/>
            <person name="Borriss R."/>
            <person name="Boursier L."/>
            <person name="Brans A."/>
            <person name="Braun M."/>
            <person name="Brignell S.C."/>
            <person name="Bron S."/>
            <person name="Brouillet S."/>
            <person name="Bruschi C.V."/>
            <person name="Caldwell B."/>
            <person name="Capuano V."/>
            <person name="Carter N.M."/>
            <person name="Choi S.-K."/>
            <person name="Codani J.-J."/>
            <person name="Connerton I.F."/>
            <person name="Cummings N.J."/>
            <person name="Daniel R.A."/>
            <person name="Denizot F."/>
            <person name="Devine K.M."/>
            <person name="Duesterhoeft A."/>
            <person name="Ehrlich S.D."/>
            <person name="Emmerson P.T."/>
            <person name="Entian K.-D."/>
            <person name="Errington J."/>
            <person name="Fabret C."/>
            <person name="Ferrari E."/>
            <person name="Foulger D."/>
            <person name="Fritz C."/>
            <person name="Fujita M."/>
            <person name="Fujita Y."/>
            <person name="Fuma S."/>
            <person name="Galizzi A."/>
            <person name="Galleron N."/>
            <person name="Ghim S.-Y."/>
            <person name="Glaser P."/>
            <person name="Goffeau A."/>
            <person name="Golightly E.J."/>
            <person name="Grandi G."/>
            <person name="Guiseppi G."/>
            <person name="Guy B.J."/>
            <person name="Haga K."/>
            <person name="Haiech J."/>
            <person name="Harwood C.R."/>
            <person name="Henaut A."/>
            <person name="Hilbert H."/>
            <person name="Holsappel S."/>
            <person name="Hosono S."/>
            <person name="Hullo M.-F."/>
            <person name="Itaya M."/>
            <person name="Jones L.-M."/>
            <person name="Joris B."/>
            <person name="Karamata D."/>
            <person name="Kasahara Y."/>
            <person name="Klaerr-Blanchard M."/>
            <person name="Klein C."/>
            <person name="Kobayashi Y."/>
            <person name="Koetter P."/>
            <person name="Koningstein G."/>
            <person name="Krogh S."/>
            <person name="Kumano M."/>
            <person name="Kurita K."/>
            <person name="Lapidus A."/>
            <person name="Lardinois S."/>
            <person name="Lauber J."/>
            <person name="Lazarevic V."/>
            <person name="Lee S.-M."/>
            <person name="Levine A."/>
            <person name="Liu H."/>
            <person name="Masuda S."/>
            <person name="Mauel C."/>
            <person name="Medigue C."/>
            <person name="Medina N."/>
            <person name="Mellado R.P."/>
            <person name="Mizuno M."/>
            <person name="Moestl D."/>
            <person name="Nakai S."/>
            <person name="Noback M."/>
            <person name="Noone D."/>
            <person name="O'Reilly M."/>
            <person name="Ogawa K."/>
            <person name="Ogiwara A."/>
            <person name="Oudega B."/>
            <person name="Park S.-H."/>
            <person name="Parro V."/>
            <person name="Pohl T.M."/>
            <person name="Portetelle D."/>
            <person name="Porwollik S."/>
            <person name="Prescott A.M."/>
            <person name="Presecan E."/>
            <person name="Pujic P."/>
            <person name="Purnelle B."/>
            <person name="Rapoport G."/>
            <person name="Rey M."/>
            <person name="Reynolds S."/>
            <person name="Rieger M."/>
            <person name="Rivolta C."/>
            <person name="Rocha E."/>
            <person name="Roche B."/>
            <person name="Rose M."/>
            <person name="Sadaie Y."/>
            <person name="Sato T."/>
            <person name="Scanlan E."/>
            <person name="Schleich S."/>
            <person name="Schroeter R."/>
            <person name="Scoffone F."/>
            <person name="Sekiguchi J."/>
            <person name="Sekowska A."/>
            <person name="Seror S.J."/>
            <person name="Serror P."/>
            <person name="Shin B.-S."/>
            <person name="Soldo B."/>
            <person name="Sorokin A."/>
            <person name="Tacconi E."/>
            <person name="Takagi T."/>
            <person name="Takahashi H."/>
            <person name="Takemaru K."/>
            <person name="Takeuchi M."/>
            <person name="Tamakoshi A."/>
            <person name="Tanaka T."/>
            <person name="Terpstra P."/>
            <person name="Tognoni A."/>
            <person name="Tosato V."/>
            <person name="Uchiyama S."/>
            <person name="Vandenbol M."/>
            <person name="Vannier F."/>
            <person name="Vassarotti A."/>
            <person name="Viari A."/>
            <person name="Wambutt R."/>
            <person name="Wedler E."/>
            <person name="Wedler H."/>
            <person name="Weitzenegger T."/>
            <person name="Winters P."/>
            <person name="Wipat A."/>
            <person name="Yamamoto H."/>
            <person name="Yamane K."/>
            <person name="Yasumoto K."/>
            <person name="Yata K."/>
            <person name="Yoshida K."/>
            <person name="Yoshikawa H.-F."/>
            <person name="Zumstein E."/>
            <person name="Yoshikawa H."/>
            <person name="Danchin A."/>
        </authorList>
    </citation>
    <scope>NUCLEOTIDE SEQUENCE [LARGE SCALE GENOMIC DNA]</scope>
    <source>
        <strain>168</strain>
    </source>
</reference>
<accession>O34838</accession>
<proteinExistence type="predicted"/>
<name>YOPW_BACSU</name>
<gene>
    <name type="primary">yopW</name>
    <name type="ordered locus">BSU20740</name>
</gene>
<organism>
    <name type="scientific">Bacillus subtilis (strain 168)</name>
    <dbReference type="NCBI Taxonomy" id="224308"/>
    <lineage>
        <taxon>Bacteria</taxon>
        <taxon>Bacillati</taxon>
        <taxon>Bacillota</taxon>
        <taxon>Bacilli</taxon>
        <taxon>Bacillales</taxon>
        <taxon>Bacillaceae</taxon>
        <taxon>Bacillus</taxon>
    </lineage>
</organism>
<dbReference type="EMBL" id="AL009126">
    <property type="protein sequence ID" value="CAB13966.1"/>
    <property type="molecule type" value="Genomic_DNA"/>
</dbReference>
<dbReference type="RefSeq" id="NP_389956.1">
    <property type="nucleotide sequence ID" value="NC_000964.3"/>
</dbReference>
<dbReference type="RefSeq" id="WP_004399316.1">
    <property type="nucleotide sequence ID" value="NZ_OZ025638.1"/>
</dbReference>
<dbReference type="FunCoup" id="O34838">
    <property type="interactions" value="13"/>
</dbReference>
<dbReference type="STRING" id="224308.BSU20740"/>
<dbReference type="PaxDb" id="224308-BSU20740"/>
<dbReference type="EnsemblBacteria" id="CAB13966">
    <property type="protein sequence ID" value="CAB13966"/>
    <property type="gene ID" value="BSU_20740"/>
</dbReference>
<dbReference type="GeneID" id="936484"/>
<dbReference type="KEGG" id="bsu:BSU20740"/>
<dbReference type="PATRIC" id="fig|224308.179.peg.2264"/>
<dbReference type="InParanoid" id="O34838"/>
<dbReference type="OrthoDB" id="2895277at2"/>
<dbReference type="BioCyc" id="BSUB:BSU20740-MONOMER"/>
<dbReference type="Proteomes" id="UP000001570">
    <property type="component" value="Chromosome"/>
</dbReference>
<keyword id="KW-1185">Reference proteome</keyword>
<feature type="chain" id="PRO_0000369123" description="SPbeta prophage-derived uncharacterized protein YopW">
    <location>
        <begin position="1"/>
        <end position="111"/>
    </location>
</feature>